<sequence length="889" mass="101673">MGSCFSLQVSDQTLNRIFNCLIGKSYIRTLEKNLRALQREMEDLRAIQHEVQNKVARDEARHQRRLEAVQVWLDRVNSVDIECKDLLSVTPVELQKLCLCGLCSKYVCSSYKYGKKVFLLLEEVKKLNSEGNFDEVSQPPPRSEVEERPTQPTIGQEDMLEKAWNRLMEDGVGIMGLHGMGGVGKTTLFKKIHNKFAEIGGTFDIVIWIVVSKGVMISKLQEDIAEKLHLCDDLWKNKNESDKATDIHRVLKGKRFVLMLDDIWEKVDLEAIGIPYPSEVNKCKVAFTTRSREVCGEMGDHKPMQVNCLEPEDAWELFKNKVGDNTLSSDPVIVELAREVAQKCRGLPLALNVIGETMSSKTMVQEWEHAIHVFNTSAAEFSDMQNKILPILKYSYDSLGDEHIKSCFLYCALFPEDGEIYNEKLIDYWICEGFIGEDQVIKRARNKGYAMLGTLTRANLLTKVGTYYCVMHDVVREMALWIASDFGKQKENFVVQAGVGLHEIPKVKDWGAVRKMSLMDNDIEEITCESKCSELTTLFLQSNKLKNLPGAFIRYMQKLVVLDLSYNRDFNKLPEQISGLVSLQFLDLSNTSIEHMPIGLKELKKLTFLDLTYTDRLCSISGISRLLSLRLLRLLGSKVHGDASVLKELQQLQNLQELAITVSAELISLDQRLAKLISNLCIEGFLQKPFDLSFLASMENLSSLRVENSYFSEIKCRESETESSYLRINPKIPCFTNLSRLEIMKCHSMKDLTWILFAPNLVVLLIEDSREVGEIINKEKATNLTSITPFLKLEWLILYNLPKLESIYWSPLPFPVLLTMDVSNCPKLRKLPLNATSVSKVEEFEIHMYPPPEQENELEWEDDDTKNRFLPSIKPYKYFVYPGMSFLTV</sequence>
<reference key="1">
    <citation type="journal article" date="2000" name="Nature">
        <title>Sequence and analysis of chromosome 1 of the plant Arabidopsis thaliana.</title>
        <authorList>
            <person name="Theologis A."/>
            <person name="Ecker J.R."/>
            <person name="Palm C.J."/>
            <person name="Federspiel N.A."/>
            <person name="Kaul S."/>
            <person name="White O."/>
            <person name="Alonso J."/>
            <person name="Altafi H."/>
            <person name="Araujo R."/>
            <person name="Bowman C.L."/>
            <person name="Brooks S.Y."/>
            <person name="Buehler E."/>
            <person name="Chan A."/>
            <person name="Chao Q."/>
            <person name="Chen H."/>
            <person name="Cheuk R.F."/>
            <person name="Chin C.W."/>
            <person name="Chung M.K."/>
            <person name="Conn L."/>
            <person name="Conway A.B."/>
            <person name="Conway A.R."/>
            <person name="Creasy T.H."/>
            <person name="Dewar K."/>
            <person name="Dunn P."/>
            <person name="Etgu P."/>
            <person name="Feldblyum T.V."/>
            <person name="Feng J.-D."/>
            <person name="Fong B."/>
            <person name="Fujii C.Y."/>
            <person name="Gill J.E."/>
            <person name="Goldsmith A.D."/>
            <person name="Haas B."/>
            <person name="Hansen N.F."/>
            <person name="Hughes B."/>
            <person name="Huizar L."/>
            <person name="Hunter J.L."/>
            <person name="Jenkins J."/>
            <person name="Johnson-Hopson C."/>
            <person name="Khan S."/>
            <person name="Khaykin E."/>
            <person name="Kim C.J."/>
            <person name="Koo H.L."/>
            <person name="Kremenetskaia I."/>
            <person name="Kurtz D.B."/>
            <person name="Kwan A."/>
            <person name="Lam B."/>
            <person name="Langin-Hooper S."/>
            <person name="Lee A."/>
            <person name="Lee J.M."/>
            <person name="Lenz C.A."/>
            <person name="Li J.H."/>
            <person name="Li Y.-P."/>
            <person name="Lin X."/>
            <person name="Liu S.X."/>
            <person name="Liu Z.A."/>
            <person name="Luros J.S."/>
            <person name="Maiti R."/>
            <person name="Marziali A."/>
            <person name="Militscher J."/>
            <person name="Miranda M."/>
            <person name="Nguyen M."/>
            <person name="Nierman W.C."/>
            <person name="Osborne B.I."/>
            <person name="Pai G."/>
            <person name="Peterson J."/>
            <person name="Pham P.K."/>
            <person name="Rizzo M."/>
            <person name="Rooney T."/>
            <person name="Rowley D."/>
            <person name="Sakano H."/>
            <person name="Salzberg S.L."/>
            <person name="Schwartz J.R."/>
            <person name="Shinn P."/>
            <person name="Southwick A.M."/>
            <person name="Sun H."/>
            <person name="Tallon L.J."/>
            <person name="Tambunga G."/>
            <person name="Toriumi M.J."/>
            <person name="Town C.D."/>
            <person name="Utterback T."/>
            <person name="Van Aken S."/>
            <person name="Vaysberg M."/>
            <person name="Vysotskaia V.S."/>
            <person name="Walker M."/>
            <person name="Wu D."/>
            <person name="Yu G."/>
            <person name="Fraser C.M."/>
            <person name="Venter J.C."/>
            <person name="Davis R.W."/>
        </authorList>
    </citation>
    <scope>NUCLEOTIDE SEQUENCE [LARGE SCALE GENOMIC DNA]</scope>
    <source>
        <strain>cv. Columbia</strain>
    </source>
</reference>
<reference key="2">
    <citation type="journal article" date="2017" name="Plant J.">
        <title>Araport11: a complete reannotation of the Arabidopsis thaliana reference genome.</title>
        <authorList>
            <person name="Cheng C.Y."/>
            <person name="Krishnakumar V."/>
            <person name="Chan A.P."/>
            <person name="Thibaud-Nissen F."/>
            <person name="Schobel S."/>
            <person name="Town C.D."/>
        </authorList>
    </citation>
    <scope>GENOME REANNOTATION</scope>
    <source>
        <strain>cv. Columbia</strain>
    </source>
</reference>
<reference key="3">
    <citation type="journal article" date="2003" name="Science">
        <title>Empirical analysis of transcriptional activity in the Arabidopsis genome.</title>
        <authorList>
            <person name="Yamada K."/>
            <person name="Lim J."/>
            <person name="Dale J.M."/>
            <person name="Chen H."/>
            <person name="Shinn P."/>
            <person name="Palm C.J."/>
            <person name="Southwick A.M."/>
            <person name="Wu H.C."/>
            <person name="Kim C.J."/>
            <person name="Nguyen M."/>
            <person name="Pham P.K."/>
            <person name="Cheuk R.F."/>
            <person name="Karlin-Newmann G."/>
            <person name="Liu S.X."/>
            <person name="Lam B."/>
            <person name="Sakano H."/>
            <person name="Wu T."/>
            <person name="Yu G."/>
            <person name="Miranda M."/>
            <person name="Quach H.L."/>
            <person name="Tripp M."/>
            <person name="Chang C.H."/>
            <person name="Lee J.M."/>
            <person name="Toriumi M.J."/>
            <person name="Chan M.M."/>
            <person name="Tang C.C."/>
            <person name="Onodera C.S."/>
            <person name="Deng J.M."/>
            <person name="Akiyama K."/>
            <person name="Ansari Y."/>
            <person name="Arakawa T."/>
            <person name="Banh J."/>
            <person name="Banno F."/>
            <person name="Bowser L."/>
            <person name="Brooks S.Y."/>
            <person name="Carninci P."/>
            <person name="Chao Q."/>
            <person name="Choy N."/>
            <person name="Enju A."/>
            <person name="Goldsmith A.D."/>
            <person name="Gurjal M."/>
            <person name="Hansen N.F."/>
            <person name="Hayashizaki Y."/>
            <person name="Johnson-Hopson C."/>
            <person name="Hsuan V.W."/>
            <person name="Iida K."/>
            <person name="Karnes M."/>
            <person name="Khan S."/>
            <person name="Koesema E."/>
            <person name="Ishida J."/>
            <person name="Jiang P.X."/>
            <person name="Jones T."/>
            <person name="Kawai J."/>
            <person name="Kamiya A."/>
            <person name="Meyers C."/>
            <person name="Nakajima M."/>
            <person name="Narusaka M."/>
            <person name="Seki M."/>
            <person name="Sakurai T."/>
            <person name="Satou M."/>
            <person name="Tamse R."/>
            <person name="Vaysberg M."/>
            <person name="Wallender E.K."/>
            <person name="Wong C."/>
            <person name="Yamamura Y."/>
            <person name="Yuan S."/>
            <person name="Shinozaki K."/>
            <person name="Davis R.W."/>
            <person name="Theologis A."/>
            <person name="Ecker J.R."/>
        </authorList>
    </citation>
    <scope>NUCLEOTIDE SEQUENCE [LARGE SCALE MRNA]</scope>
    <source>
        <strain>cv. Columbia</strain>
    </source>
</reference>
<reference key="4">
    <citation type="journal article" date="2008" name="Plant J.">
        <title>Constitutive activation of a CC-NB-LRR protein alters morphogenesis through the cytokinin pathway in Arabidopsis.</title>
        <authorList>
            <person name="Igari K."/>
            <person name="Endo S."/>
            <person name="Hibara K."/>
            <person name="Aida M."/>
            <person name="Sakakibara H."/>
            <person name="Kawasaki T."/>
            <person name="Tasaka M."/>
        </authorList>
    </citation>
    <scope>FUNCTION</scope>
    <scope>MUTAGENESIS OF 763-VAL--GLU-767</scope>
</reference>
<reference key="5">
    <citation type="journal article" date="2011" name="Plant Cell Physiol.">
        <title>RPT2a, a 26S proteasome AAA-ATPase, is directly involved in Arabidopsis CC-NBS-LRR protein uni-1D-induced signaling pathways.</title>
        <authorList>
            <person name="Chung K."/>
            <person name="Tasaka M."/>
        </authorList>
    </citation>
    <scope>INTERACTION WITH RPT2A</scope>
</reference>
<reference key="6">
    <citation type="journal article" date="2016" name="Plant Cell Physiol.">
        <title>Efficient in planta detection and dissection of de novo mutation events in the Arabidopsis thaliana disease resistance gene UNI.</title>
        <authorList>
            <person name="Ogawa T."/>
            <person name="Mori A."/>
            <person name="Igari K."/>
            <person name="Morita M.T."/>
            <person name="Tasaka M."/>
            <person name="Uchida N."/>
        </authorList>
    </citation>
    <scope>FUNCTION</scope>
</reference>
<protein>
    <recommendedName>
        <fullName evidence="8">Disease resistance protein UNI</fullName>
    </recommendedName>
    <alternativeName>
        <fullName evidence="7">Protein UNI</fullName>
    </alternativeName>
</protein>
<gene>
    <name evidence="7" type="primary">UNI</name>
    <name evidence="9" type="ordered locus">At1g61180</name>
    <name evidence="10" type="ORF">F11P17.10</name>
</gene>
<dbReference type="EMBL" id="AC002294">
    <property type="protein sequence ID" value="AAB71477.1"/>
    <property type="molecule type" value="Genomic_DNA"/>
</dbReference>
<dbReference type="EMBL" id="CP002684">
    <property type="protein sequence ID" value="AEE33799.1"/>
    <property type="molecule type" value="Genomic_DNA"/>
</dbReference>
<dbReference type="EMBL" id="AY054518">
    <property type="protein sequence ID" value="AAK96709.1"/>
    <property type="molecule type" value="mRNA"/>
</dbReference>
<dbReference type="PIR" id="F96637">
    <property type="entry name" value="F96637"/>
</dbReference>
<dbReference type="RefSeq" id="NP_176313.1">
    <molecule id="Q940K0-1"/>
    <property type="nucleotide sequence ID" value="NM_104799.4"/>
</dbReference>
<dbReference type="SMR" id="Q940K0"/>
<dbReference type="BioGRID" id="27635">
    <property type="interactions" value="2"/>
</dbReference>
<dbReference type="FunCoup" id="Q940K0">
    <property type="interactions" value="296"/>
</dbReference>
<dbReference type="STRING" id="3702.Q940K0"/>
<dbReference type="iPTMnet" id="Q940K0"/>
<dbReference type="PaxDb" id="3702-AT1G61180.2"/>
<dbReference type="ProteomicsDB" id="224312">
    <molecule id="Q940K0-1"/>
</dbReference>
<dbReference type="EnsemblPlants" id="AT1G61180.1">
    <molecule id="Q940K0-1"/>
    <property type="protein sequence ID" value="AT1G61180.1"/>
    <property type="gene ID" value="AT1G61180"/>
</dbReference>
<dbReference type="GeneID" id="842411"/>
<dbReference type="Gramene" id="AT1G61180.1">
    <molecule id="Q940K0-1"/>
    <property type="protein sequence ID" value="AT1G61180.1"/>
    <property type="gene ID" value="AT1G61180"/>
</dbReference>
<dbReference type="KEGG" id="ath:AT1G61180"/>
<dbReference type="Araport" id="AT1G61180"/>
<dbReference type="TAIR" id="AT1G61180">
    <property type="gene designation" value="UNI"/>
</dbReference>
<dbReference type="eggNOG" id="KOG4658">
    <property type="taxonomic scope" value="Eukaryota"/>
</dbReference>
<dbReference type="HOGENOM" id="CLU_000427_4_0_1"/>
<dbReference type="InParanoid" id="Q940K0"/>
<dbReference type="OMA" id="ITIGCAM"/>
<dbReference type="PhylomeDB" id="Q940K0"/>
<dbReference type="PRO" id="PR:Q940K0"/>
<dbReference type="Proteomes" id="UP000006548">
    <property type="component" value="Chromosome 1"/>
</dbReference>
<dbReference type="ExpressionAtlas" id="Q940K0">
    <property type="expression patterns" value="baseline and differential"/>
</dbReference>
<dbReference type="GO" id="GO:0043531">
    <property type="term" value="F:ADP binding"/>
    <property type="evidence" value="ECO:0007669"/>
    <property type="project" value="InterPro"/>
</dbReference>
<dbReference type="GO" id="GO:0005524">
    <property type="term" value="F:ATP binding"/>
    <property type="evidence" value="ECO:0007669"/>
    <property type="project" value="UniProtKB-KW"/>
</dbReference>
<dbReference type="GO" id="GO:0006952">
    <property type="term" value="P:defense response"/>
    <property type="evidence" value="ECO:0007669"/>
    <property type="project" value="UniProtKB-KW"/>
</dbReference>
<dbReference type="FunFam" id="3.80.10.10:FF:001644">
    <property type="entry name" value="LRR and NB-ARC domains-containing disease resistance protein"/>
    <property type="match status" value="1"/>
</dbReference>
<dbReference type="FunFam" id="3.80.10.10:FF:001429">
    <property type="entry name" value="Probable disease resistance protein At1g61190"/>
    <property type="match status" value="1"/>
</dbReference>
<dbReference type="FunFam" id="3.40.50.300:FF:001091">
    <property type="entry name" value="Probable disease resistance protein At1g61300"/>
    <property type="match status" value="1"/>
</dbReference>
<dbReference type="FunFam" id="1.10.10.10:FF:000322">
    <property type="entry name" value="Probable disease resistance protein At1g63360"/>
    <property type="match status" value="1"/>
</dbReference>
<dbReference type="FunFam" id="1.10.8.430:FF:000003">
    <property type="entry name" value="Probable disease resistance protein At5g66910"/>
    <property type="match status" value="1"/>
</dbReference>
<dbReference type="Gene3D" id="1.10.8.430">
    <property type="entry name" value="Helical domain of apoptotic protease-activating factors"/>
    <property type="match status" value="1"/>
</dbReference>
<dbReference type="Gene3D" id="3.40.50.300">
    <property type="entry name" value="P-loop containing nucleotide triphosphate hydrolases"/>
    <property type="match status" value="1"/>
</dbReference>
<dbReference type="Gene3D" id="3.80.10.10">
    <property type="entry name" value="Ribonuclease Inhibitor"/>
    <property type="match status" value="2"/>
</dbReference>
<dbReference type="Gene3D" id="1.10.10.10">
    <property type="entry name" value="Winged helix-like DNA-binding domain superfamily/Winged helix DNA-binding domain"/>
    <property type="match status" value="1"/>
</dbReference>
<dbReference type="InterPro" id="IPR042197">
    <property type="entry name" value="Apaf_helical"/>
</dbReference>
<dbReference type="InterPro" id="IPR032675">
    <property type="entry name" value="LRR_dom_sf"/>
</dbReference>
<dbReference type="InterPro" id="IPR055414">
    <property type="entry name" value="LRR_R13L4/SHOC2-like"/>
</dbReference>
<dbReference type="InterPro" id="IPR002182">
    <property type="entry name" value="NB-ARC"/>
</dbReference>
<dbReference type="InterPro" id="IPR027417">
    <property type="entry name" value="P-loop_NTPase"/>
</dbReference>
<dbReference type="InterPro" id="IPR050905">
    <property type="entry name" value="Plant_NBS-LRR"/>
</dbReference>
<dbReference type="InterPro" id="IPR036388">
    <property type="entry name" value="WH-like_DNA-bd_sf"/>
</dbReference>
<dbReference type="PANTHER" id="PTHR33463:SF220">
    <property type="entry name" value="NB-ARC DOMAIN-CONTAINING PROTEIN"/>
    <property type="match status" value="1"/>
</dbReference>
<dbReference type="PANTHER" id="PTHR33463">
    <property type="entry name" value="NB-ARC DOMAIN-CONTAINING PROTEIN-RELATED"/>
    <property type="match status" value="1"/>
</dbReference>
<dbReference type="Pfam" id="PF23598">
    <property type="entry name" value="LRR_14"/>
    <property type="match status" value="1"/>
</dbReference>
<dbReference type="Pfam" id="PF00931">
    <property type="entry name" value="NB-ARC"/>
    <property type="match status" value="1"/>
</dbReference>
<dbReference type="Pfam" id="PF23559">
    <property type="entry name" value="WH_DRP"/>
    <property type="match status" value="1"/>
</dbReference>
<dbReference type="PRINTS" id="PR00364">
    <property type="entry name" value="DISEASERSIST"/>
</dbReference>
<dbReference type="SUPFAM" id="SSF52058">
    <property type="entry name" value="L domain-like"/>
    <property type="match status" value="1"/>
</dbReference>
<dbReference type="SUPFAM" id="SSF52540">
    <property type="entry name" value="P-loop containing nucleoside triphosphate hydrolases"/>
    <property type="match status" value="1"/>
</dbReference>
<name>UNI_ARATH</name>
<proteinExistence type="evidence at protein level"/>
<organism>
    <name type="scientific">Arabidopsis thaliana</name>
    <name type="common">Mouse-ear cress</name>
    <dbReference type="NCBI Taxonomy" id="3702"/>
    <lineage>
        <taxon>Eukaryota</taxon>
        <taxon>Viridiplantae</taxon>
        <taxon>Streptophyta</taxon>
        <taxon>Embryophyta</taxon>
        <taxon>Tracheophyta</taxon>
        <taxon>Spermatophyta</taxon>
        <taxon>Magnoliopsida</taxon>
        <taxon>eudicotyledons</taxon>
        <taxon>Gunneridae</taxon>
        <taxon>Pentapetalae</taxon>
        <taxon>rosids</taxon>
        <taxon>malvids</taxon>
        <taxon>Brassicales</taxon>
        <taxon>Brassicaceae</taxon>
        <taxon>Camelineae</taxon>
        <taxon>Arabidopsis</taxon>
    </lineage>
</organism>
<evidence type="ECO:0000250" key="1">
    <source>
        <dbReference type="UniProtKB" id="Q8W4J9"/>
    </source>
</evidence>
<evidence type="ECO:0000255" key="2"/>
<evidence type="ECO:0000256" key="3">
    <source>
        <dbReference type="SAM" id="MobiDB-lite"/>
    </source>
</evidence>
<evidence type="ECO:0000269" key="4">
    <source>
    </source>
</evidence>
<evidence type="ECO:0000269" key="5">
    <source>
    </source>
</evidence>
<evidence type="ECO:0000269" key="6">
    <source>
    </source>
</evidence>
<evidence type="ECO:0000303" key="7">
    <source>
    </source>
</evidence>
<evidence type="ECO:0000305" key="8"/>
<evidence type="ECO:0000312" key="9">
    <source>
        <dbReference type="Araport" id="AT1G61180"/>
    </source>
</evidence>
<evidence type="ECO:0000312" key="10">
    <source>
        <dbReference type="EMBL" id="AAB71477.1"/>
    </source>
</evidence>
<accession>Q940K0</accession>
<accession>O22728</accession>
<feature type="chain" id="PRO_0000212747" description="Disease resistance protein UNI">
    <location>
        <begin position="1"/>
        <end position="889"/>
    </location>
</feature>
<feature type="domain" description="NB-ARC" evidence="2">
    <location>
        <begin position="137"/>
        <end position="440"/>
    </location>
</feature>
<feature type="repeat" description="LRR 1" evidence="2">
    <location>
        <begin position="510"/>
        <end position="532"/>
    </location>
</feature>
<feature type="repeat" description="LRR 2" evidence="2">
    <location>
        <begin position="533"/>
        <end position="555"/>
    </location>
</feature>
<feature type="repeat" description="LRR 3" evidence="2">
    <location>
        <begin position="557"/>
        <end position="580"/>
    </location>
</feature>
<feature type="repeat" description="LRR 4" evidence="2">
    <location>
        <begin position="581"/>
        <end position="603"/>
    </location>
</feature>
<feature type="repeat" description="LRR 5" evidence="2">
    <location>
        <begin position="604"/>
        <end position="625"/>
    </location>
</feature>
<feature type="repeat" description="LRR 6" evidence="2">
    <location>
        <begin position="626"/>
        <end position="652"/>
    </location>
</feature>
<feature type="repeat" description="LRR 7" evidence="2">
    <location>
        <begin position="653"/>
        <end position="676"/>
    </location>
</feature>
<feature type="repeat" description="LRR 8" evidence="2">
    <location>
        <begin position="698"/>
        <end position="721"/>
    </location>
</feature>
<feature type="repeat" description="LRR 9" evidence="2">
    <location>
        <begin position="825"/>
        <end position="848"/>
    </location>
</feature>
<feature type="region of interest" description="Disordered" evidence="3">
    <location>
        <begin position="131"/>
        <end position="152"/>
    </location>
</feature>
<feature type="coiled-coil region" evidence="2">
    <location>
        <begin position="19"/>
        <end position="64"/>
    </location>
</feature>
<feature type="binding site" evidence="2">
    <location>
        <begin position="179"/>
        <end position="186"/>
    </location>
    <ligand>
        <name>ATP</name>
        <dbReference type="ChEBI" id="CHEBI:30616"/>
    </ligand>
</feature>
<feature type="mutagenesis site" description="In uni-1D; constitutive activation of UNI." evidence="4">
    <original>VLLIE</original>
    <variation>YLYIG</variation>
    <location>
        <begin position="763"/>
        <end position="767"/>
    </location>
</feature>
<feature type="sequence conflict" description="In Ref. 3; AAK96709." evidence="8" ref="3">
    <original>G</original>
    <variation>S</variation>
    <location>
        <position position="465"/>
    </location>
</feature>
<keyword id="KW-0025">Alternative splicing</keyword>
<keyword id="KW-0067">ATP-binding</keyword>
<keyword id="KW-0175">Coiled coil</keyword>
<keyword id="KW-0433">Leucine-rich repeat</keyword>
<keyword id="KW-0547">Nucleotide-binding</keyword>
<keyword id="KW-0611">Plant defense</keyword>
<keyword id="KW-1185">Reference proteome</keyword>
<keyword id="KW-0677">Repeat</keyword>
<comment type="function">
    <text evidence="4 6">Involved in disease resistance via the salicylic acid (SA) signaling pathway (PubMed:18315541, PubMed:27016096). Involved in shoot architecture development via the cytokinin signaling pathway (PubMed:18315541, PubMed:27016096).</text>
</comment>
<comment type="subunit">
    <text evidence="5">Interacts with RPT2A.</text>
</comment>
<comment type="alternative products">
    <event type="alternative splicing"/>
    <isoform>
        <id>Q940K0-1</id>
        <name>1</name>
        <sequence type="displayed"/>
    </isoform>
    <text evidence="8">A number of isoforms are produced. According to EST sequences.</text>
</comment>
<comment type="domain">
    <text evidence="1">The LRR repeats probably act as specificity determinant of pathogen recognition.</text>
</comment>
<comment type="miscellaneous">
    <text evidence="4 7">The gain-of-function mutant uni-1D (T-DNA tagging) exhibits bushy and severe dwarf phenotype, due to altered shoot architecture caused by enhanced axillary branch formation via the cytokinin pathway (PubMed:18315541). Uni-1D plants exhibit constitutive expression of pathogenesis-related (PR) genes through salicylic acid accumulation (PubMed:18315541). 'Uni' means sea urchin in Japanese (PubMed:18315541).</text>
</comment>
<comment type="similarity">
    <text evidence="8">Belongs to the disease resistance NB-LRR family.</text>
</comment>
<comment type="online information" name="NIB-LRRS">
    <link uri="http://niblrrs.ucdavis.edu"/>
    <text>Functional and comparative genomics of disease resistance gene homologs</text>
</comment>